<name>RL23_DESHY</name>
<reference key="1">
    <citation type="journal article" date="2006" name="J. Bacteriol.">
        <title>Complete genome sequence of the dehalorespiring bacterium Desulfitobacterium hafniense Y51 and comparison with Dehalococcoides ethenogenes 195.</title>
        <authorList>
            <person name="Nonaka H."/>
            <person name="Keresztes G."/>
            <person name="Shinoda Y."/>
            <person name="Ikenaga Y."/>
            <person name="Abe M."/>
            <person name="Naito K."/>
            <person name="Inatomi K."/>
            <person name="Furukawa K."/>
            <person name="Inui M."/>
            <person name="Yukawa H."/>
        </authorList>
    </citation>
    <scope>NUCLEOTIDE SEQUENCE [LARGE SCALE GENOMIC DNA]</scope>
    <source>
        <strain>Y51</strain>
    </source>
</reference>
<evidence type="ECO:0000255" key="1">
    <source>
        <dbReference type="HAMAP-Rule" id="MF_01369"/>
    </source>
</evidence>
<evidence type="ECO:0000305" key="2"/>
<sequence>MRDARDVLKRPVISEKSVGLIEENKYSFWVDTAANKIEIKAAVEKMFKVKVVDVRTINVDGKKKRVGKHVGRTADRKKAIVTLKAGDRIEGFAGL</sequence>
<organism>
    <name type="scientific">Desulfitobacterium hafniense (strain Y51)</name>
    <dbReference type="NCBI Taxonomy" id="138119"/>
    <lineage>
        <taxon>Bacteria</taxon>
        <taxon>Bacillati</taxon>
        <taxon>Bacillota</taxon>
        <taxon>Clostridia</taxon>
        <taxon>Eubacteriales</taxon>
        <taxon>Desulfitobacteriaceae</taxon>
        <taxon>Desulfitobacterium</taxon>
    </lineage>
</organism>
<accession>Q250N0</accession>
<dbReference type="EMBL" id="AP008230">
    <property type="protein sequence ID" value="BAE82262.1"/>
    <property type="molecule type" value="Genomic_DNA"/>
</dbReference>
<dbReference type="RefSeq" id="WP_005810158.1">
    <property type="nucleotide sequence ID" value="NC_007907.1"/>
</dbReference>
<dbReference type="SMR" id="Q250N0"/>
<dbReference type="STRING" id="138119.DSY0473"/>
<dbReference type="KEGG" id="dsy:DSY0473"/>
<dbReference type="eggNOG" id="COG0089">
    <property type="taxonomic scope" value="Bacteria"/>
</dbReference>
<dbReference type="HOGENOM" id="CLU_037562_3_2_9"/>
<dbReference type="Proteomes" id="UP000001946">
    <property type="component" value="Chromosome"/>
</dbReference>
<dbReference type="GO" id="GO:1990904">
    <property type="term" value="C:ribonucleoprotein complex"/>
    <property type="evidence" value="ECO:0007669"/>
    <property type="project" value="UniProtKB-KW"/>
</dbReference>
<dbReference type="GO" id="GO:0005840">
    <property type="term" value="C:ribosome"/>
    <property type="evidence" value="ECO:0007669"/>
    <property type="project" value="UniProtKB-KW"/>
</dbReference>
<dbReference type="GO" id="GO:0019843">
    <property type="term" value="F:rRNA binding"/>
    <property type="evidence" value="ECO:0007669"/>
    <property type="project" value="UniProtKB-UniRule"/>
</dbReference>
<dbReference type="GO" id="GO:0003735">
    <property type="term" value="F:structural constituent of ribosome"/>
    <property type="evidence" value="ECO:0007669"/>
    <property type="project" value="InterPro"/>
</dbReference>
<dbReference type="GO" id="GO:0006412">
    <property type="term" value="P:translation"/>
    <property type="evidence" value="ECO:0007669"/>
    <property type="project" value="UniProtKB-UniRule"/>
</dbReference>
<dbReference type="FunFam" id="3.30.70.330:FF:000001">
    <property type="entry name" value="50S ribosomal protein L23"/>
    <property type="match status" value="1"/>
</dbReference>
<dbReference type="Gene3D" id="3.30.70.330">
    <property type="match status" value="1"/>
</dbReference>
<dbReference type="HAMAP" id="MF_01369_B">
    <property type="entry name" value="Ribosomal_uL23_B"/>
    <property type="match status" value="1"/>
</dbReference>
<dbReference type="InterPro" id="IPR012677">
    <property type="entry name" value="Nucleotide-bd_a/b_plait_sf"/>
</dbReference>
<dbReference type="InterPro" id="IPR013025">
    <property type="entry name" value="Ribosomal_uL23-like"/>
</dbReference>
<dbReference type="InterPro" id="IPR012678">
    <property type="entry name" value="Ribosomal_uL23/eL15/eS24_sf"/>
</dbReference>
<dbReference type="InterPro" id="IPR001014">
    <property type="entry name" value="Ribosomal_uL23_CS"/>
</dbReference>
<dbReference type="NCBIfam" id="NF004359">
    <property type="entry name" value="PRK05738.1-3"/>
    <property type="match status" value="1"/>
</dbReference>
<dbReference type="NCBIfam" id="NF004363">
    <property type="entry name" value="PRK05738.2-4"/>
    <property type="match status" value="1"/>
</dbReference>
<dbReference type="NCBIfam" id="NF004366">
    <property type="entry name" value="PRK05738.3-2"/>
    <property type="match status" value="1"/>
</dbReference>
<dbReference type="PANTHER" id="PTHR11620">
    <property type="entry name" value="60S RIBOSOMAL PROTEIN L23A"/>
    <property type="match status" value="1"/>
</dbReference>
<dbReference type="Pfam" id="PF00276">
    <property type="entry name" value="Ribosomal_L23"/>
    <property type="match status" value="1"/>
</dbReference>
<dbReference type="SUPFAM" id="SSF54189">
    <property type="entry name" value="Ribosomal proteins S24e, L23 and L15e"/>
    <property type="match status" value="1"/>
</dbReference>
<dbReference type="PROSITE" id="PS00050">
    <property type="entry name" value="RIBOSOMAL_L23"/>
    <property type="match status" value="1"/>
</dbReference>
<feature type="chain" id="PRO_0000272739" description="Large ribosomal subunit protein uL23">
    <location>
        <begin position="1"/>
        <end position="95"/>
    </location>
</feature>
<gene>
    <name evidence="1" type="primary">rplW</name>
    <name type="ordered locus">DSY0473</name>
</gene>
<protein>
    <recommendedName>
        <fullName evidence="1">Large ribosomal subunit protein uL23</fullName>
    </recommendedName>
    <alternativeName>
        <fullName evidence="2">50S ribosomal protein L23</fullName>
    </alternativeName>
</protein>
<comment type="function">
    <text evidence="1">One of the early assembly proteins it binds 23S rRNA. One of the proteins that surrounds the polypeptide exit tunnel on the outside of the ribosome. Forms the main docking site for trigger factor binding to the ribosome.</text>
</comment>
<comment type="subunit">
    <text evidence="1">Part of the 50S ribosomal subunit. Contacts protein L29, and trigger factor when it is bound to the ribosome.</text>
</comment>
<comment type="similarity">
    <text evidence="1">Belongs to the universal ribosomal protein uL23 family.</text>
</comment>
<proteinExistence type="inferred from homology"/>
<keyword id="KW-1185">Reference proteome</keyword>
<keyword id="KW-0687">Ribonucleoprotein</keyword>
<keyword id="KW-0689">Ribosomal protein</keyword>
<keyword id="KW-0694">RNA-binding</keyword>
<keyword id="KW-0699">rRNA-binding</keyword>